<organism>
    <name type="scientific">Chlamydia muridarum (strain MoPn / Nigg)</name>
    <dbReference type="NCBI Taxonomy" id="243161"/>
    <lineage>
        <taxon>Bacteria</taxon>
        <taxon>Pseudomonadati</taxon>
        <taxon>Chlamydiota</taxon>
        <taxon>Chlamydiia</taxon>
        <taxon>Chlamydiales</taxon>
        <taxon>Chlamydiaceae</taxon>
        <taxon>Chlamydia/Chlamydophila group</taxon>
        <taxon>Chlamydia</taxon>
    </lineage>
</organism>
<feature type="chain" id="PRO_0000108992" description="UDP-N-acetylmuramoylalanine--D-glutamate ligase">
    <location>
        <begin position="1"/>
        <end position="416"/>
    </location>
</feature>
<feature type="binding site" evidence="1">
    <location>
        <begin position="108"/>
        <end position="114"/>
    </location>
    <ligand>
        <name>ATP</name>
        <dbReference type="ChEBI" id="CHEBI:30616"/>
    </ligand>
</feature>
<name>MURD_CHLMU</name>
<reference key="1">
    <citation type="journal article" date="2000" name="Nucleic Acids Res.">
        <title>Genome sequences of Chlamydia trachomatis MoPn and Chlamydia pneumoniae AR39.</title>
        <authorList>
            <person name="Read T.D."/>
            <person name="Brunham R.C."/>
            <person name="Shen C."/>
            <person name="Gill S.R."/>
            <person name="Heidelberg J.F."/>
            <person name="White O."/>
            <person name="Hickey E.K."/>
            <person name="Peterson J.D."/>
            <person name="Utterback T.R."/>
            <person name="Berry K.J."/>
            <person name="Bass S."/>
            <person name="Linher K.D."/>
            <person name="Weidman J.F."/>
            <person name="Khouri H.M."/>
            <person name="Craven B."/>
            <person name="Bowman C."/>
            <person name="Dodson R.J."/>
            <person name="Gwinn M.L."/>
            <person name="Nelson W.C."/>
            <person name="DeBoy R.T."/>
            <person name="Kolonay J.F."/>
            <person name="McClarty G."/>
            <person name="Salzberg S.L."/>
            <person name="Eisen J.A."/>
            <person name="Fraser C.M."/>
        </authorList>
    </citation>
    <scope>NUCLEOTIDE SEQUENCE [LARGE SCALE GENOMIC DNA]</scope>
    <source>
        <strain>MoPn / Nigg</strain>
    </source>
</reference>
<comment type="function">
    <text evidence="1">Cell wall formation. Catalyzes the addition of glutamate to the nucleotide precursor UDP-N-acetylmuramoyl-L-alanine (UMA).</text>
</comment>
<comment type="catalytic activity">
    <reaction evidence="1">
        <text>UDP-N-acetyl-alpha-D-muramoyl-L-alanine + D-glutamate + ATP = UDP-N-acetyl-alpha-D-muramoyl-L-alanyl-D-glutamate + ADP + phosphate + H(+)</text>
        <dbReference type="Rhea" id="RHEA:16429"/>
        <dbReference type="ChEBI" id="CHEBI:15378"/>
        <dbReference type="ChEBI" id="CHEBI:29986"/>
        <dbReference type="ChEBI" id="CHEBI:30616"/>
        <dbReference type="ChEBI" id="CHEBI:43474"/>
        <dbReference type="ChEBI" id="CHEBI:83898"/>
        <dbReference type="ChEBI" id="CHEBI:83900"/>
        <dbReference type="ChEBI" id="CHEBI:456216"/>
        <dbReference type="EC" id="6.3.2.9"/>
    </reaction>
</comment>
<comment type="pathway">
    <text evidence="1">Cell wall biogenesis; peptidoglycan biosynthesis.</text>
</comment>
<comment type="subcellular location">
    <subcellularLocation>
        <location evidence="1">Cytoplasm</location>
    </subcellularLocation>
</comment>
<comment type="similarity">
    <text evidence="1">Belongs to the MurCDEF family.</text>
</comment>
<comment type="sequence caution" evidence="2">
    <conflict type="erroneous initiation">
        <sequence resource="EMBL-CDS" id="AAF39017"/>
    </conflict>
</comment>
<dbReference type="EC" id="6.3.2.9" evidence="1"/>
<dbReference type="EMBL" id="AE002160">
    <property type="protein sequence ID" value="AAF39017.1"/>
    <property type="status" value="ALT_INIT"/>
    <property type="molecule type" value="Genomic_DNA"/>
</dbReference>
<dbReference type="PIR" id="F81736">
    <property type="entry name" value="F81736"/>
</dbReference>
<dbReference type="RefSeq" id="WP_010229504.1">
    <property type="nucleotide sequence ID" value="NZ_CP063055.1"/>
</dbReference>
<dbReference type="SMR" id="Q9PLG5"/>
<dbReference type="GeneID" id="1245673"/>
<dbReference type="KEGG" id="cmu:TC_0139"/>
<dbReference type="eggNOG" id="COG0771">
    <property type="taxonomic scope" value="Bacteria"/>
</dbReference>
<dbReference type="HOGENOM" id="CLU_032540_0_0_0"/>
<dbReference type="OrthoDB" id="9809796at2"/>
<dbReference type="UniPathway" id="UPA00219"/>
<dbReference type="Proteomes" id="UP000000800">
    <property type="component" value="Chromosome"/>
</dbReference>
<dbReference type="GO" id="GO:0005737">
    <property type="term" value="C:cytoplasm"/>
    <property type="evidence" value="ECO:0007669"/>
    <property type="project" value="UniProtKB-SubCell"/>
</dbReference>
<dbReference type="GO" id="GO:0005524">
    <property type="term" value="F:ATP binding"/>
    <property type="evidence" value="ECO:0007669"/>
    <property type="project" value="UniProtKB-UniRule"/>
</dbReference>
<dbReference type="GO" id="GO:0008764">
    <property type="term" value="F:UDP-N-acetylmuramoylalanine-D-glutamate ligase activity"/>
    <property type="evidence" value="ECO:0007669"/>
    <property type="project" value="UniProtKB-UniRule"/>
</dbReference>
<dbReference type="GO" id="GO:0051301">
    <property type="term" value="P:cell division"/>
    <property type="evidence" value="ECO:0007669"/>
    <property type="project" value="UniProtKB-KW"/>
</dbReference>
<dbReference type="GO" id="GO:0071555">
    <property type="term" value="P:cell wall organization"/>
    <property type="evidence" value="ECO:0007669"/>
    <property type="project" value="UniProtKB-KW"/>
</dbReference>
<dbReference type="GO" id="GO:0009252">
    <property type="term" value="P:peptidoglycan biosynthetic process"/>
    <property type="evidence" value="ECO:0007669"/>
    <property type="project" value="UniProtKB-UniRule"/>
</dbReference>
<dbReference type="GO" id="GO:0008360">
    <property type="term" value="P:regulation of cell shape"/>
    <property type="evidence" value="ECO:0007669"/>
    <property type="project" value="UniProtKB-KW"/>
</dbReference>
<dbReference type="Gene3D" id="3.90.190.20">
    <property type="entry name" value="Mur ligase, C-terminal domain"/>
    <property type="match status" value="1"/>
</dbReference>
<dbReference type="Gene3D" id="3.40.1190.10">
    <property type="entry name" value="Mur-like, catalytic domain"/>
    <property type="match status" value="1"/>
</dbReference>
<dbReference type="Gene3D" id="3.40.50.720">
    <property type="entry name" value="NAD(P)-binding Rossmann-like Domain"/>
    <property type="match status" value="1"/>
</dbReference>
<dbReference type="HAMAP" id="MF_00639">
    <property type="entry name" value="MurD"/>
    <property type="match status" value="1"/>
</dbReference>
<dbReference type="InterPro" id="IPR036565">
    <property type="entry name" value="Mur-like_cat_sf"/>
</dbReference>
<dbReference type="InterPro" id="IPR004101">
    <property type="entry name" value="Mur_ligase_C"/>
</dbReference>
<dbReference type="InterPro" id="IPR036615">
    <property type="entry name" value="Mur_ligase_C_dom_sf"/>
</dbReference>
<dbReference type="InterPro" id="IPR013221">
    <property type="entry name" value="Mur_ligase_cen"/>
</dbReference>
<dbReference type="InterPro" id="IPR005762">
    <property type="entry name" value="MurD"/>
</dbReference>
<dbReference type="NCBIfam" id="TIGR01087">
    <property type="entry name" value="murD"/>
    <property type="match status" value="1"/>
</dbReference>
<dbReference type="PANTHER" id="PTHR43692">
    <property type="entry name" value="UDP-N-ACETYLMURAMOYLALANINE--D-GLUTAMATE LIGASE"/>
    <property type="match status" value="1"/>
</dbReference>
<dbReference type="PANTHER" id="PTHR43692:SF1">
    <property type="entry name" value="UDP-N-ACETYLMURAMOYLALANINE--D-GLUTAMATE LIGASE"/>
    <property type="match status" value="1"/>
</dbReference>
<dbReference type="Pfam" id="PF02875">
    <property type="entry name" value="Mur_ligase_C"/>
    <property type="match status" value="1"/>
</dbReference>
<dbReference type="Pfam" id="PF08245">
    <property type="entry name" value="Mur_ligase_M"/>
    <property type="match status" value="1"/>
</dbReference>
<dbReference type="Pfam" id="PF21799">
    <property type="entry name" value="MurD-like_N"/>
    <property type="match status" value="1"/>
</dbReference>
<dbReference type="SUPFAM" id="SSF51984">
    <property type="entry name" value="MurCD N-terminal domain"/>
    <property type="match status" value="1"/>
</dbReference>
<dbReference type="SUPFAM" id="SSF53623">
    <property type="entry name" value="MurD-like peptide ligases, catalytic domain"/>
    <property type="match status" value="1"/>
</dbReference>
<dbReference type="SUPFAM" id="SSF53244">
    <property type="entry name" value="MurD-like peptide ligases, peptide-binding domain"/>
    <property type="match status" value="1"/>
</dbReference>
<sequence length="416" mass="46265">MGLKRVVVIGLGLSGKSIARFLARKGVYVLGVDSSIQALQHCPYIHEKLLETDEFPTQVDYVVRSPGISKDHPWVKAARAAQISVVTDIQLAFQTKEFIEQKSFGITGTVGKTTTILFLEYLLRKAGIPAFAMGNVGVPILDGMQNSGVRLVEMSSFQLADQETSYPVLSGGMILNISDNHLDYHGSFLEYCQSKQNLSLCMRNPEDLWVGDQRFCGRSYWEEVQKYMRLLDKESALKPLYLHDKYNYCCAYLLAQAEFPIAKSLFIEAVATFKKPSHRMEYLGEKCGVHYINDSKATTVRATEKALLSIGSRAIVILGGRNKGYSFVSLLPSLRRFAKSVVAMGECAQEIAQDLDGFPVTVVRNLHEALLCAEEQAIPGDVVLLSPACASFDQFRSYEERGAIFKQLVGMEEVLL</sequence>
<protein>
    <recommendedName>
        <fullName evidence="1">UDP-N-acetylmuramoylalanine--D-glutamate ligase</fullName>
        <ecNumber evidence="1">6.3.2.9</ecNumber>
    </recommendedName>
    <alternativeName>
        <fullName evidence="1">D-glutamic acid-adding enzyme</fullName>
    </alternativeName>
    <alternativeName>
        <fullName evidence="1">UDP-N-acetylmuramoyl-L-alanyl-D-glutamate synthetase</fullName>
    </alternativeName>
</protein>
<proteinExistence type="inferred from homology"/>
<evidence type="ECO:0000255" key="1">
    <source>
        <dbReference type="HAMAP-Rule" id="MF_00639"/>
    </source>
</evidence>
<evidence type="ECO:0000305" key="2"/>
<gene>
    <name evidence="1" type="primary">murD</name>
    <name type="ordered locus">TC_0139</name>
</gene>
<keyword id="KW-0067">ATP-binding</keyword>
<keyword id="KW-0131">Cell cycle</keyword>
<keyword id="KW-0132">Cell division</keyword>
<keyword id="KW-0133">Cell shape</keyword>
<keyword id="KW-0961">Cell wall biogenesis/degradation</keyword>
<keyword id="KW-0963">Cytoplasm</keyword>
<keyword id="KW-0436">Ligase</keyword>
<keyword id="KW-0547">Nucleotide-binding</keyword>
<keyword id="KW-0573">Peptidoglycan synthesis</keyword>
<accession>Q9PLG5</accession>